<keyword id="KW-0067">ATP-binding</keyword>
<keyword id="KW-0963">Cytoplasm</keyword>
<keyword id="KW-0418">Kinase</keyword>
<keyword id="KW-0547">Nucleotide-binding</keyword>
<keyword id="KW-0539">Nucleus</keyword>
<keyword id="KW-1185">Reference proteome</keyword>
<keyword id="KW-0723">Serine/threonine-protein kinase</keyword>
<keyword id="KW-0808">Transferase</keyword>
<accession>Q5XIT0</accession>
<dbReference type="EC" id="2.7.11.22"/>
<dbReference type="EMBL" id="BC083590">
    <property type="protein sequence ID" value="AAH83590.1"/>
    <property type="molecule type" value="mRNA"/>
</dbReference>
<dbReference type="RefSeq" id="NP_001012035.1">
    <property type="nucleotide sequence ID" value="NM_001012035.1"/>
</dbReference>
<dbReference type="SMR" id="Q5XIT0"/>
<dbReference type="BioGRID" id="258108">
    <property type="interactions" value="1"/>
</dbReference>
<dbReference type="FunCoup" id="Q5XIT0">
    <property type="interactions" value="1080"/>
</dbReference>
<dbReference type="STRING" id="10116.ENSRNOP00000045371"/>
<dbReference type="iPTMnet" id="Q5XIT0"/>
<dbReference type="PhosphoSitePlus" id="Q5XIT0"/>
<dbReference type="Ensembl" id="ENSRNOT00000050038.5">
    <property type="protein sequence ID" value="ENSRNOP00000049130.3"/>
    <property type="gene ID" value="ENSRNOG00000002506.8"/>
</dbReference>
<dbReference type="GeneID" id="305242"/>
<dbReference type="KEGG" id="rno:305242"/>
<dbReference type="UCSC" id="RGD:1309625">
    <property type="organism name" value="rat"/>
</dbReference>
<dbReference type="AGR" id="RGD:1309625"/>
<dbReference type="CTD" id="8999"/>
<dbReference type="RGD" id="1309625">
    <property type="gene designation" value="Cdkl2"/>
</dbReference>
<dbReference type="eggNOG" id="KOG0593">
    <property type="taxonomic scope" value="Eukaryota"/>
</dbReference>
<dbReference type="GeneTree" id="ENSGT00940000160368"/>
<dbReference type="InParanoid" id="Q5XIT0"/>
<dbReference type="PRO" id="PR:Q5XIT0"/>
<dbReference type="Proteomes" id="UP000002494">
    <property type="component" value="Chromosome 14"/>
</dbReference>
<dbReference type="Bgee" id="ENSRNOG00000002506">
    <property type="expression patterns" value="Expressed in frontal cortex and 20 other cell types or tissues"/>
</dbReference>
<dbReference type="ExpressionAtlas" id="Q5XIT0">
    <property type="expression patterns" value="baseline and differential"/>
</dbReference>
<dbReference type="GO" id="GO:0005737">
    <property type="term" value="C:cytoplasm"/>
    <property type="evidence" value="ECO:0007669"/>
    <property type="project" value="UniProtKB-SubCell"/>
</dbReference>
<dbReference type="GO" id="GO:0005634">
    <property type="term" value="C:nucleus"/>
    <property type="evidence" value="ECO:0000318"/>
    <property type="project" value="GO_Central"/>
</dbReference>
<dbReference type="GO" id="GO:0005524">
    <property type="term" value="F:ATP binding"/>
    <property type="evidence" value="ECO:0007669"/>
    <property type="project" value="UniProtKB-KW"/>
</dbReference>
<dbReference type="GO" id="GO:0004693">
    <property type="term" value="F:cyclin-dependent protein serine/threonine kinase activity"/>
    <property type="evidence" value="ECO:0007669"/>
    <property type="project" value="UniProtKB-EC"/>
</dbReference>
<dbReference type="GO" id="GO:0106310">
    <property type="term" value="F:protein serine kinase activity"/>
    <property type="evidence" value="ECO:0007669"/>
    <property type="project" value="RHEA"/>
</dbReference>
<dbReference type="GO" id="GO:0004674">
    <property type="term" value="F:protein serine/threonine kinase activity"/>
    <property type="evidence" value="ECO:0000318"/>
    <property type="project" value="GO_Central"/>
</dbReference>
<dbReference type="CDD" id="cd07846">
    <property type="entry name" value="STKc_CDKL2_3"/>
    <property type="match status" value="1"/>
</dbReference>
<dbReference type="FunFam" id="3.30.200.20:FF:000049">
    <property type="entry name" value="cyclin-dependent kinase-like 1 isoform X1"/>
    <property type="match status" value="1"/>
</dbReference>
<dbReference type="FunFam" id="1.10.510.10:FF:000261">
    <property type="entry name" value="cyclin-dependent kinase-like 2 isoform X2"/>
    <property type="match status" value="1"/>
</dbReference>
<dbReference type="Gene3D" id="3.30.200.20">
    <property type="entry name" value="Phosphorylase Kinase, domain 1"/>
    <property type="match status" value="1"/>
</dbReference>
<dbReference type="Gene3D" id="1.10.510.10">
    <property type="entry name" value="Transferase(Phosphotransferase) domain 1"/>
    <property type="match status" value="1"/>
</dbReference>
<dbReference type="InterPro" id="IPR050108">
    <property type="entry name" value="CDK"/>
</dbReference>
<dbReference type="InterPro" id="IPR011009">
    <property type="entry name" value="Kinase-like_dom_sf"/>
</dbReference>
<dbReference type="InterPro" id="IPR000719">
    <property type="entry name" value="Prot_kinase_dom"/>
</dbReference>
<dbReference type="InterPro" id="IPR017441">
    <property type="entry name" value="Protein_kinase_ATP_BS"/>
</dbReference>
<dbReference type="InterPro" id="IPR008271">
    <property type="entry name" value="Ser/Thr_kinase_AS"/>
</dbReference>
<dbReference type="PANTHER" id="PTHR24056">
    <property type="entry name" value="CELL DIVISION PROTEIN KINASE"/>
    <property type="match status" value="1"/>
</dbReference>
<dbReference type="PANTHER" id="PTHR24056:SF241">
    <property type="entry name" value="CYCLIN-DEPENDENT KINASE-LIKE 2"/>
    <property type="match status" value="1"/>
</dbReference>
<dbReference type="Pfam" id="PF00069">
    <property type="entry name" value="Pkinase"/>
    <property type="match status" value="1"/>
</dbReference>
<dbReference type="SMART" id="SM00220">
    <property type="entry name" value="S_TKc"/>
    <property type="match status" value="1"/>
</dbReference>
<dbReference type="SUPFAM" id="SSF56112">
    <property type="entry name" value="Protein kinase-like (PK-like)"/>
    <property type="match status" value="1"/>
</dbReference>
<dbReference type="PROSITE" id="PS00107">
    <property type="entry name" value="PROTEIN_KINASE_ATP"/>
    <property type="match status" value="1"/>
</dbReference>
<dbReference type="PROSITE" id="PS50011">
    <property type="entry name" value="PROTEIN_KINASE_DOM"/>
    <property type="match status" value="1"/>
</dbReference>
<dbReference type="PROSITE" id="PS00108">
    <property type="entry name" value="PROTEIN_KINASE_ST"/>
    <property type="match status" value="1"/>
</dbReference>
<reference key="1">
    <citation type="journal article" date="2004" name="Genome Res.">
        <title>The status, quality, and expansion of the NIH full-length cDNA project: the Mammalian Gene Collection (MGC).</title>
        <authorList>
            <consortium name="The MGC Project Team"/>
        </authorList>
    </citation>
    <scope>NUCLEOTIDE SEQUENCE [LARGE SCALE MRNA]</scope>
    <source>
        <tissue>Testis</tissue>
    </source>
</reference>
<evidence type="ECO:0000250" key="1"/>
<evidence type="ECO:0000255" key="2">
    <source>
        <dbReference type="PROSITE-ProRule" id="PRU00159"/>
    </source>
</evidence>
<evidence type="ECO:0000255" key="3">
    <source>
        <dbReference type="PROSITE-ProRule" id="PRU10027"/>
    </source>
</evidence>
<evidence type="ECO:0000256" key="4">
    <source>
        <dbReference type="SAM" id="MobiDB-lite"/>
    </source>
</evidence>
<evidence type="ECO:0000305" key="5"/>
<evidence type="ECO:0000312" key="6">
    <source>
        <dbReference type="RGD" id="1309625"/>
    </source>
</evidence>
<sequence>MEKYENLGLVGEGSYGMVMKCRNKDSGRIVAIKKFLESDDDKMVKKIAMREIKLLKQLRHENLVNLLEVCKKKKRWYLVFEFVDHTILDDLKLFPNGLDYQVVQKYLFQIINGIGFCHSHNIIHRDIKPENILVSQSGVVKLCDFGFARTLAAPGEVYTDYVATRWYRAPELLVGDVKYGKAVDIWAIGCLVIEMLMGQPLFPGESDIDQLHHIMTCLGNLIPRHQELFYKNPVFAGVRLPEIKDIEAEPLESRYPKLPEVVISLAKKCLHIDPDKRPLCADLLHHDFFQMDGFAERFSQELQLKIEKDARNNSLPKKFQIRKKEKDDALGEERKTLVVQDTNADPKTKDSKVLKVKGSKIDVEKTEKGTRASNGSCLHDNGTSHKGLSSTSLRDCSNVTIDHPRNPGTAIPPLTHNLSAVAPGINAAMGTIPGVQNYRVDEKTKKYCNPFVKPSQPSPSGIYNMNVSASVSNCPLPRKSKHSPPLDLAVSMGARRVKLYLETESET</sequence>
<gene>
    <name evidence="6" type="primary">Cdkl2</name>
</gene>
<comment type="catalytic activity">
    <reaction>
        <text>L-seryl-[protein] + ATP = O-phospho-L-seryl-[protein] + ADP + H(+)</text>
        <dbReference type="Rhea" id="RHEA:17989"/>
        <dbReference type="Rhea" id="RHEA-COMP:9863"/>
        <dbReference type="Rhea" id="RHEA-COMP:11604"/>
        <dbReference type="ChEBI" id="CHEBI:15378"/>
        <dbReference type="ChEBI" id="CHEBI:29999"/>
        <dbReference type="ChEBI" id="CHEBI:30616"/>
        <dbReference type="ChEBI" id="CHEBI:83421"/>
        <dbReference type="ChEBI" id="CHEBI:456216"/>
        <dbReference type="EC" id="2.7.11.22"/>
    </reaction>
</comment>
<comment type="catalytic activity">
    <reaction>
        <text>L-threonyl-[protein] + ATP = O-phospho-L-threonyl-[protein] + ADP + H(+)</text>
        <dbReference type="Rhea" id="RHEA:46608"/>
        <dbReference type="Rhea" id="RHEA-COMP:11060"/>
        <dbReference type="Rhea" id="RHEA-COMP:11605"/>
        <dbReference type="ChEBI" id="CHEBI:15378"/>
        <dbReference type="ChEBI" id="CHEBI:30013"/>
        <dbReference type="ChEBI" id="CHEBI:30616"/>
        <dbReference type="ChEBI" id="CHEBI:61977"/>
        <dbReference type="ChEBI" id="CHEBI:456216"/>
        <dbReference type="EC" id="2.7.11.22"/>
    </reaction>
</comment>
<comment type="subcellular location">
    <subcellularLocation>
        <location evidence="1">Cytoplasm</location>
    </subcellularLocation>
    <subcellularLocation>
        <location evidence="1">Nucleus</location>
    </subcellularLocation>
</comment>
<comment type="domain">
    <text>The [NKR]KIAxRE motif seems to be a cyclin-binding region.</text>
</comment>
<comment type="similarity">
    <text evidence="5">Belongs to the protein kinase superfamily. CMGC Ser/Thr protein kinase family. CDC2/CDKX subfamily.</text>
</comment>
<feature type="chain" id="PRO_0000085819" description="Cyclin-dependent kinase-like 2">
    <location>
        <begin position="1"/>
        <end position="507"/>
    </location>
</feature>
<feature type="domain" description="Protein kinase" evidence="2">
    <location>
        <begin position="4"/>
        <end position="289"/>
    </location>
</feature>
<feature type="region of interest" description="Disordered" evidence="4">
    <location>
        <begin position="365"/>
        <end position="392"/>
    </location>
</feature>
<feature type="short sequence motif" description="[NKR]KIAxRE">
    <location>
        <begin position="45"/>
        <end position="51"/>
    </location>
</feature>
<feature type="active site" description="Proton acceptor" evidence="2 3">
    <location>
        <position position="126"/>
    </location>
</feature>
<feature type="binding site" evidence="2">
    <location>
        <begin position="10"/>
        <end position="18"/>
    </location>
    <ligand>
        <name>ATP</name>
        <dbReference type="ChEBI" id="CHEBI:30616"/>
    </ligand>
</feature>
<feature type="binding site" evidence="2">
    <location>
        <position position="33"/>
    </location>
    <ligand>
        <name>ATP</name>
        <dbReference type="ChEBI" id="CHEBI:30616"/>
    </ligand>
</feature>
<organism>
    <name type="scientific">Rattus norvegicus</name>
    <name type="common">Rat</name>
    <dbReference type="NCBI Taxonomy" id="10116"/>
    <lineage>
        <taxon>Eukaryota</taxon>
        <taxon>Metazoa</taxon>
        <taxon>Chordata</taxon>
        <taxon>Craniata</taxon>
        <taxon>Vertebrata</taxon>
        <taxon>Euteleostomi</taxon>
        <taxon>Mammalia</taxon>
        <taxon>Eutheria</taxon>
        <taxon>Euarchontoglires</taxon>
        <taxon>Glires</taxon>
        <taxon>Rodentia</taxon>
        <taxon>Myomorpha</taxon>
        <taxon>Muroidea</taxon>
        <taxon>Muridae</taxon>
        <taxon>Murinae</taxon>
        <taxon>Rattus</taxon>
    </lineage>
</organism>
<proteinExistence type="evidence at transcript level"/>
<protein>
    <recommendedName>
        <fullName evidence="5">Cyclin-dependent kinase-like 2</fullName>
        <ecNumber>2.7.11.22</ecNumber>
    </recommendedName>
</protein>
<name>CDKL2_RAT</name>